<keyword id="KW-0002">3D-structure</keyword>
<keyword id="KW-0067">ATP-binding</keyword>
<keyword id="KW-1003">Cell membrane</keyword>
<keyword id="KW-0325">Glycoprotein</keyword>
<keyword id="KW-0418">Kinase</keyword>
<keyword id="KW-0433">Leucine-rich repeat</keyword>
<keyword id="KW-0446">Lipid-binding</keyword>
<keyword id="KW-0472">Membrane</keyword>
<keyword id="KW-0547">Nucleotide-binding</keyword>
<keyword id="KW-0597">Phosphoprotein</keyword>
<keyword id="KW-0675">Receptor</keyword>
<keyword id="KW-1185">Reference proteome</keyword>
<keyword id="KW-0677">Repeat</keyword>
<keyword id="KW-0723">Serine/threonine-protein kinase</keyword>
<keyword id="KW-0732">Signal</keyword>
<keyword id="KW-0754">Steroid-binding</keyword>
<keyword id="KW-0808">Transferase</keyword>
<keyword id="KW-0812">Transmembrane</keyword>
<keyword id="KW-1133">Transmembrane helix</keyword>
<protein>
    <recommendedName>
        <fullName>Serine/threonine-protein kinase BRI1-like 1</fullName>
        <ecNumber>2.7.11.1</ecNumber>
    </recommendedName>
    <alternativeName>
        <fullName>BRASSINOSTEROID INSENSITIVE 1-like protein 1</fullName>
    </alternativeName>
</protein>
<comment type="function">
    <text evidence="9 10">Receptor with a serine/threonine-protein kinase activity. Regulates, in response to brassinosteroid binding, a signaling cascade involved in plant development. Binds brassinolide. May be involved in cell growth and vascular differentiation.</text>
</comment>
<comment type="catalytic activity">
    <reaction>
        <text>L-seryl-[protein] + ATP = O-phospho-L-seryl-[protein] + ADP + H(+)</text>
        <dbReference type="Rhea" id="RHEA:17989"/>
        <dbReference type="Rhea" id="RHEA-COMP:9863"/>
        <dbReference type="Rhea" id="RHEA-COMP:11604"/>
        <dbReference type="ChEBI" id="CHEBI:15378"/>
        <dbReference type="ChEBI" id="CHEBI:29999"/>
        <dbReference type="ChEBI" id="CHEBI:30616"/>
        <dbReference type="ChEBI" id="CHEBI:83421"/>
        <dbReference type="ChEBI" id="CHEBI:456216"/>
        <dbReference type="EC" id="2.7.11.1"/>
    </reaction>
</comment>
<comment type="catalytic activity">
    <reaction>
        <text>L-threonyl-[protein] + ATP = O-phospho-L-threonyl-[protein] + ADP + H(+)</text>
        <dbReference type="Rhea" id="RHEA:46608"/>
        <dbReference type="Rhea" id="RHEA-COMP:11060"/>
        <dbReference type="Rhea" id="RHEA-COMP:11605"/>
        <dbReference type="ChEBI" id="CHEBI:15378"/>
        <dbReference type="ChEBI" id="CHEBI:30013"/>
        <dbReference type="ChEBI" id="CHEBI:30616"/>
        <dbReference type="ChEBI" id="CHEBI:61977"/>
        <dbReference type="ChEBI" id="CHEBI:456216"/>
        <dbReference type="EC" id="2.7.11.1"/>
    </reaction>
</comment>
<comment type="interaction">
    <interactant intactId="EBI-590903">
        <id>Q9ZWC8</id>
    </interactant>
    <interactant intactId="EBI-16902452">
        <id>Q8VYT3</id>
        <label>At4g30520</label>
    </interactant>
    <organismsDiffer>false</organismsDiffer>
    <experiments>2</experiments>
</comment>
<comment type="interaction">
    <interactant intactId="EBI-590903">
        <id>Q9ZWC8</id>
    </interactant>
    <interactant intactId="EBI-4475781">
        <id>Q9LVM0</id>
        <label>At5g58300</label>
    </interactant>
    <organismsDiffer>false</organismsDiffer>
    <experiments>2</experiments>
</comment>
<comment type="interaction">
    <interactant intactId="EBI-590903">
        <id>Q9ZWC8</id>
    </interactant>
    <interactant intactId="EBI-617138">
        <id>Q94F62</id>
        <label>BAK1</label>
    </interactant>
    <organismsDiffer>false</organismsDiffer>
    <experiments>7</experiments>
</comment>
<comment type="interaction">
    <interactant intactId="EBI-590903">
        <id>Q9ZWC8</id>
    </interactant>
    <interactant intactId="EBI-1111615">
        <id>Q9FMZ0</id>
        <label>BKI1</label>
    </interactant>
    <organismsDiffer>false</organismsDiffer>
    <experiments>4</experiments>
</comment>
<comment type="interaction">
    <interactant intactId="EBI-590903">
        <id>Q9ZWC8</id>
    </interactant>
    <interactant intactId="EBI-20656524">
        <id>Q9FGL5</id>
        <label>CEPR1</label>
    </interactant>
    <organismsDiffer>false</organismsDiffer>
    <experiments>2</experiments>
</comment>
<comment type="interaction">
    <interactant intactId="EBI-590903">
        <id>Q9ZWC8</id>
    </interactant>
    <interactant intactId="EBI-16895926">
        <id>Q6XAT2</id>
        <label>ERL2</label>
    </interactant>
    <organismsDiffer>false</organismsDiffer>
    <experiments>2</experiments>
</comment>
<comment type="interaction">
    <interactant intactId="EBI-590903">
        <id>Q9ZWC8</id>
    </interactant>
    <interactant intactId="EBI-16924837">
        <id>Q9C8I6</id>
        <label>IOS1</label>
    </interactant>
    <organismsDiffer>false</organismsDiffer>
    <experiments>2</experiments>
</comment>
<comment type="interaction">
    <interactant intactId="EBI-590903">
        <id>Q9ZWC8</id>
    </interactant>
    <interactant intactId="EBI-20651739">
        <id>Q9ZVD4</id>
        <label>LRR-RLK</label>
    </interactant>
    <organismsDiffer>false</organismsDiffer>
    <experiments>2</experiments>
</comment>
<comment type="interaction">
    <interactant intactId="EBI-590903">
        <id>Q9ZWC8</id>
    </interactant>
    <interactant intactId="EBI-16146189">
        <id>Q9LFS4</id>
        <label>NIK1</label>
    </interactant>
    <organismsDiffer>false</organismsDiffer>
    <experiments>2</experiments>
</comment>
<comment type="interaction">
    <interactant intactId="EBI-590903">
        <id>Q9ZWC8</id>
    </interactant>
    <interactant intactId="EBI-16887868">
        <id>Q8LPS5</id>
        <label>SERK5</label>
    </interactant>
    <organismsDiffer>false</organismsDiffer>
    <experiments>2</experiments>
</comment>
<comment type="interaction">
    <interactant intactId="EBI-590903">
        <id>Q9ZWC8</id>
    </interactant>
    <interactant intactId="EBI-16954301">
        <id>Q9C8M9</id>
        <label>SRF6</label>
    </interactant>
    <organismsDiffer>false</organismsDiffer>
    <experiments>2</experiments>
</comment>
<comment type="interaction">
    <interactant intactId="EBI-590903">
        <id>Q9ZWC8</id>
    </interactant>
    <interactant intactId="EBI-17072125">
        <id>Q8RWZ1</id>
        <label>SUB</label>
    </interactant>
    <organismsDiffer>false</organismsDiffer>
    <experiments>2</experiments>
</comment>
<comment type="subcellular location">
    <subcellularLocation>
        <location evidence="10">Cell membrane</location>
        <topology evidence="10">Single-pass type I membrane protein</topology>
    </subcellularLocation>
</comment>
<comment type="tissue specificity">
    <text evidence="9 10">Predominantly expressed in vascular tissues. From 7 day old seedlings, it is expressed in the columella cells of the root tip, in the vascular initials in the meristematic region of the root and in vascular tissues. After germination, it is expressed in the stele cell and in the early differentiation zone of the root, where the expression continues from the root to the hypocotyls and cotyledons following the midvein. In mature plants, it is expressed in the vasculature of the leaf, predominantly in the midvein, and in the vascular bundles of inflorescence stems. Localizes to procambial cells of the vascular bundles located between the differentiating xylem and the phloem.</text>
</comment>
<comment type="domain">
    <text evidence="1">Contains two pairs of conservatively spaced Cys (Cys pair 1 and 2) possibly involved in forming some heterodimers.</text>
</comment>
<comment type="domain">
    <text evidence="1">A 70 amino acid island between the 19th and the 20th LRR is essential for the binding of brassinosteroids.</text>
</comment>
<comment type="similarity">
    <text evidence="6">Belongs to the protein kinase superfamily. Ser/Thr protein kinase family.</text>
</comment>
<name>BRL1_ARATH</name>
<accession>Q9ZWC8</accession>
<accession>C0LGH1</accession>
<proteinExistence type="evidence at protein level"/>
<evidence type="ECO:0000250" key="1"/>
<evidence type="ECO:0000250" key="2">
    <source>
        <dbReference type="UniProtKB" id="C0LGT6"/>
    </source>
</evidence>
<evidence type="ECO:0000250" key="3">
    <source>
        <dbReference type="UniProtKB" id="O22476"/>
    </source>
</evidence>
<evidence type="ECO:0000250" key="4">
    <source>
        <dbReference type="UniProtKB" id="Q9M0G7"/>
    </source>
</evidence>
<evidence type="ECO:0000255" key="5"/>
<evidence type="ECO:0000255" key="6">
    <source>
        <dbReference type="PROSITE-ProRule" id="PRU00159"/>
    </source>
</evidence>
<evidence type="ECO:0000255" key="7">
    <source>
        <dbReference type="PROSITE-ProRule" id="PRU10027"/>
    </source>
</evidence>
<evidence type="ECO:0000256" key="8">
    <source>
        <dbReference type="SAM" id="MobiDB-lite"/>
    </source>
</evidence>
<evidence type="ECO:0000269" key="9">
    <source>
    </source>
</evidence>
<evidence type="ECO:0000269" key="10">
    <source>
    </source>
</evidence>
<evidence type="ECO:0007744" key="11">
    <source>
    </source>
</evidence>
<evidence type="ECO:0007829" key="12">
    <source>
        <dbReference type="PDB" id="4J0M"/>
    </source>
</evidence>
<organism>
    <name type="scientific">Arabidopsis thaliana</name>
    <name type="common">Mouse-ear cress</name>
    <dbReference type="NCBI Taxonomy" id="3702"/>
    <lineage>
        <taxon>Eukaryota</taxon>
        <taxon>Viridiplantae</taxon>
        <taxon>Streptophyta</taxon>
        <taxon>Embryophyta</taxon>
        <taxon>Tracheophyta</taxon>
        <taxon>Spermatophyta</taxon>
        <taxon>Magnoliopsida</taxon>
        <taxon>eudicotyledons</taxon>
        <taxon>Gunneridae</taxon>
        <taxon>Pentapetalae</taxon>
        <taxon>rosids</taxon>
        <taxon>malvids</taxon>
        <taxon>Brassicales</taxon>
        <taxon>Brassicaceae</taxon>
        <taxon>Camelineae</taxon>
        <taxon>Arabidopsis</taxon>
    </lineage>
</organism>
<feature type="signal peptide" evidence="5">
    <location>
        <begin position="1"/>
        <end position="21"/>
    </location>
</feature>
<feature type="chain" id="PRO_0000024308" description="Serine/threonine-protein kinase BRI1-like 1">
    <location>
        <begin position="22"/>
        <end position="1166"/>
    </location>
</feature>
<feature type="topological domain" description="Extracellular" evidence="5">
    <location>
        <begin position="22"/>
        <end position="776"/>
    </location>
</feature>
<feature type="transmembrane region" description="Helical" evidence="5">
    <location>
        <begin position="777"/>
        <end position="797"/>
    </location>
</feature>
<feature type="topological domain" description="Cytoplasmic" evidence="5">
    <location>
        <begin position="798"/>
        <end position="1166"/>
    </location>
</feature>
<feature type="repeat" description="LRR 1">
    <location>
        <begin position="78"/>
        <end position="99"/>
    </location>
</feature>
<feature type="repeat" description="LRR 2">
    <location>
        <begin position="103"/>
        <end position="124"/>
    </location>
</feature>
<feature type="repeat" description="LRR 3">
    <location>
        <begin position="126"/>
        <end position="147"/>
    </location>
</feature>
<feature type="repeat" description="LRR 4">
    <location>
        <begin position="152"/>
        <end position="173"/>
    </location>
</feature>
<feature type="repeat" description="LRR 5">
    <location>
        <begin position="176"/>
        <end position="197"/>
    </location>
</feature>
<feature type="repeat" description="LRR 6">
    <location>
        <begin position="202"/>
        <end position="224"/>
    </location>
</feature>
<feature type="repeat" description="LRR 7">
    <location>
        <begin position="227"/>
        <end position="248"/>
    </location>
</feature>
<feature type="repeat" description="LRR 8">
    <location>
        <begin position="252"/>
        <end position="274"/>
    </location>
</feature>
<feature type="repeat" description="LRR 9">
    <location>
        <begin position="278"/>
        <end position="300"/>
    </location>
</feature>
<feature type="repeat" description="LRR 10">
    <location>
        <begin position="303"/>
        <end position="325"/>
    </location>
</feature>
<feature type="repeat" description="LRR 11">
    <location>
        <begin position="327"/>
        <end position="349"/>
    </location>
</feature>
<feature type="repeat" description="LRR 12">
    <location>
        <begin position="352"/>
        <end position="375"/>
    </location>
</feature>
<feature type="repeat" description="LRR 13">
    <location>
        <begin position="376"/>
        <end position="397"/>
    </location>
</feature>
<feature type="repeat" description="LRR 14">
    <location>
        <begin position="403"/>
        <end position="424"/>
    </location>
</feature>
<feature type="repeat" description="LRR 15">
    <location>
        <begin position="427"/>
        <end position="449"/>
    </location>
</feature>
<feature type="repeat" description="LRR 16">
    <location>
        <begin position="451"/>
        <end position="473"/>
    </location>
</feature>
<feature type="repeat" description="LRR 17">
    <location>
        <begin position="476"/>
        <end position="498"/>
    </location>
</feature>
<feature type="repeat" description="LRR 18">
    <location>
        <begin position="500"/>
        <end position="522"/>
    </location>
</feature>
<feature type="repeat" description="LRR 19">
    <location>
        <begin position="524"/>
        <end position="547"/>
    </location>
</feature>
<feature type="repeat" description="LRR 20">
    <location>
        <begin position="548"/>
        <end position="570"/>
    </location>
</feature>
<feature type="repeat" description="LRR 21">
    <location>
        <begin position="664"/>
        <end position="686"/>
    </location>
</feature>
<feature type="repeat" description="LRR 22">
    <location>
        <begin position="688"/>
        <end position="710"/>
    </location>
</feature>
<feature type="repeat" description="LRR 23">
    <location>
        <begin position="712"/>
        <end position="734"/>
    </location>
</feature>
<feature type="domain" description="Protein kinase" evidence="6">
    <location>
        <begin position="859"/>
        <end position="1147"/>
    </location>
</feature>
<feature type="region of interest" description="Disordered" evidence="8">
    <location>
        <begin position="1142"/>
        <end position="1166"/>
    </location>
</feature>
<feature type="short sequence motif" description="Cys pair 1">
    <location>
        <begin position="66"/>
        <end position="73"/>
    </location>
</feature>
<feature type="short sequence motif" description="Cys pair 2">
    <location>
        <begin position="748"/>
        <end position="755"/>
    </location>
</feature>
<feature type="active site" description="Proton acceptor" evidence="6 7">
    <location>
        <position position="987"/>
    </location>
</feature>
<feature type="binding site" evidence="6">
    <location>
        <begin position="865"/>
        <end position="873"/>
    </location>
    <ligand>
        <name>ATP</name>
        <dbReference type="ChEBI" id="CHEBI:30616"/>
    </ligand>
</feature>
<feature type="binding site" evidence="6">
    <location>
        <position position="887"/>
    </location>
    <ligand>
        <name>ATP</name>
        <dbReference type="ChEBI" id="CHEBI:30616"/>
    </ligand>
</feature>
<feature type="modified residue" description="Phosphothreonine" evidence="3">
    <location>
        <position position="848"/>
    </location>
</feature>
<feature type="modified residue" description="Phosphothreonine" evidence="3">
    <location>
        <position position="856"/>
    </location>
</feature>
<feature type="modified residue" description="Phosphotyrosine" evidence="3">
    <location>
        <position position="932"/>
    </location>
</feature>
<feature type="modified residue" description="Phosphoserine" evidence="4">
    <location>
        <position position="1022"/>
    </location>
</feature>
<feature type="modified residue" description="Phosphotyrosine" evidence="2">
    <location>
        <position position="1030"/>
    </location>
</feature>
<feature type="modified residue" description="Phosphothreonine" evidence="11">
    <location>
        <position position="1141"/>
    </location>
</feature>
<feature type="glycosylation site" description="N-linked (GlcNAc...) asparagine" evidence="5">
    <location>
        <position position="33"/>
    </location>
</feature>
<feature type="glycosylation site" description="N-linked (GlcNAc...) asparagine" evidence="5">
    <location>
        <position position="97"/>
    </location>
</feature>
<feature type="glycosylation site" description="N-linked (GlcNAc...) asparagine" evidence="5">
    <location>
        <position position="157"/>
    </location>
</feature>
<feature type="glycosylation site" description="N-linked (GlcNAc...) asparagine" evidence="5">
    <location>
        <position position="212"/>
    </location>
</feature>
<feature type="glycosylation site" description="N-linked (GlcNAc...) asparagine" evidence="5">
    <location>
        <position position="227"/>
    </location>
</feature>
<feature type="glycosylation site" description="N-linked (GlcNAc...) asparagine" evidence="5">
    <location>
        <position position="237"/>
    </location>
</feature>
<feature type="glycosylation site" description="N-linked (GlcNAc...) asparagine" evidence="5">
    <location>
        <position position="257"/>
    </location>
</feature>
<feature type="glycosylation site" description="N-linked (GlcNAc...) asparagine" evidence="5">
    <location>
        <position position="362"/>
    </location>
</feature>
<feature type="glycosylation site" description="N-linked (GlcNAc...) asparagine" evidence="5">
    <location>
        <position position="373"/>
    </location>
</feature>
<feature type="glycosylation site" description="N-linked (GlcNAc...) asparagine" evidence="5">
    <location>
        <position position="451"/>
    </location>
</feature>
<feature type="glycosylation site" description="N-linked (GlcNAc...) asparagine" evidence="5">
    <location>
        <position position="461"/>
    </location>
</feature>
<feature type="glycosylation site" description="N-linked (GlcNAc...) asparagine" evidence="5">
    <location>
        <position position="521"/>
    </location>
</feature>
<feature type="glycosylation site" description="N-linked (GlcNAc...) asparagine" evidence="5">
    <location>
        <position position="532"/>
    </location>
</feature>
<feature type="glycosylation site" description="N-linked (GlcNAc...) asparagine" evidence="5">
    <location>
        <position position="558"/>
    </location>
</feature>
<feature type="glycosylation site" description="N-linked (GlcNAc...) asparagine" evidence="5">
    <location>
        <position position="638"/>
    </location>
</feature>
<feature type="glycosylation site" description="N-linked (GlcNAc...) asparagine" evidence="5">
    <location>
        <position position="722"/>
    </location>
</feature>
<feature type="glycosylation site" description="N-linked (GlcNAc...) asparagine" evidence="5">
    <location>
        <position position="743"/>
    </location>
</feature>
<feature type="helix" evidence="12">
    <location>
        <begin position="33"/>
        <end position="44"/>
    </location>
</feature>
<feature type="strand" evidence="12">
    <location>
        <begin position="46"/>
        <end position="48"/>
    </location>
</feature>
<feature type="turn" evidence="12">
    <location>
        <begin position="53"/>
        <end position="56"/>
    </location>
</feature>
<feature type="helix" evidence="12">
    <location>
        <begin position="65"/>
        <end position="67"/>
    </location>
</feature>
<feature type="strand" evidence="12">
    <location>
        <begin position="71"/>
        <end position="73"/>
    </location>
</feature>
<feature type="strand" evidence="12">
    <location>
        <begin position="79"/>
        <end position="83"/>
    </location>
</feature>
<feature type="strand" evidence="12">
    <location>
        <begin position="90"/>
        <end position="93"/>
    </location>
</feature>
<feature type="helix" evidence="12">
    <location>
        <begin position="95"/>
        <end position="99"/>
    </location>
</feature>
<feature type="strand" evidence="12">
    <location>
        <begin position="106"/>
        <end position="108"/>
    </location>
</feature>
<feature type="strand" evidence="12">
    <location>
        <begin position="111"/>
        <end position="116"/>
    </location>
</feature>
<feature type="strand" evidence="12">
    <location>
        <begin position="128"/>
        <end position="131"/>
    </location>
</feature>
<feature type="strand" evidence="12">
    <location>
        <begin position="134"/>
        <end position="137"/>
    </location>
</feature>
<feature type="helix" evidence="12">
    <location>
        <begin position="140"/>
        <end position="149"/>
    </location>
</feature>
<feature type="strand" evidence="12">
    <location>
        <begin position="155"/>
        <end position="157"/>
    </location>
</feature>
<feature type="strand" evidence="12">
    <location>
        <begin position="164"/>
        <end position="166"/>
    </location>
</feature>
<feature type="strand" evidence="12">
    <location>
        <begin position="179"/>
        <end position="181"/>
    </location>
</feature>
<feature type="strand" evidence="12">
    <location>
        <begin position="184"/>
        <end position="190"/>
    </location>
</feature>
<feature type="turn" evidence="12">
    <location>
        <begin position="193"/>
        <end position="198"/>
    </location>
</feature>
<feature type="strand" evidence="12">
    <location>
        <begin position="205"/>
        <end position="207"/>
    </location>
</feature>
<feature type="strand" evidence="12">
    <location>
        <begin position="214"/>
        <end position="216"/>
    </location>
</feature>
<feature type="helix" evidence="12">
    <location>
        <begin position="217"/>
        <end position="219"/>
    </location>
</feature>
<feature type="strand" evidence="12">
    <location>
        <begin position="230"/>
        <end position="232"/>
    </location>
</feature>
<feature type="strand" evidence="12">
    <location>
        <begin position="235"/>
        <end position="239"/>
    </location>
</feature>
<feature type="helix" evidence="12">
    <location>
        <begin position="247"/>
        <end position="249"/>
    </location>
</feature>
<feature type="strand" evidence="12">
    <location>
        <begin position="255"/>
        <end position="257"/>
    </location>
</feature>
<feature type="turn" evidence="12">
    <location>
        <begin position="270"/>
        <end position="275"/>
    </location>
</feature>
<feature type="strand" evidence="12">
    <location>
        <begin position="281"/>
        <end position="283"/>
    </location>
</feature>
<feature type="strand" evidence="12">
    <location>
        <begin position="290"/>
        <end position="292"/>
    </location>
</feature>
<feature type="helix" evidence="12">
    <location>
        <begin position="295"/>
        <end position="302"/>
    </location>
</feature>
<feature type="strand" evidence="12">
    <location>
        <begin position="305"/>
        <end position="308"/>
    </location>
</feature>
<feature type="helix" evidence="12">
    <location>
        <begin position="320"/>
        <end position="324"/>
    </location>
</feature>
<feature type="strand" evidence="12">
    <location>
        <begin position="330"/>
        <end position="332"/>
    </location>
</feature>
<feature type="strand" evidence="12">
    <location>
        <begin position="335"/>
        <end position="338"/>
    </location>
</feature>
<feature type="helix" evidence="12">
    <location>
        <begin position="342"/>
        <end position="345"/>
    </location>
</feature>
<feature type="helix" evidence="12">
    <location>
        <begin position="347"/>
        <end position="349"/>
    </location>
</feature>
<feature type="strand" evidence="12">
    <location>
        <begin position="355"/>
        <end position="357"/>
    </location>
</feature>
<feature type="strand" evidence="12">
    <location>
        <begin position="364"/>
        <end position="366"/>
    </location>
</feature>
<feature type="helix" evidence="12">
    <location>
        <begin position="369"/>
        <end position="373"/>
    </location>
</feature>
<feature type="strand" evidence="12">
    <location>
        <begin position="379"/>
        <end position="381"/>
    </location>
</feature>
<feature type="strand" evidence="12">
    <location>
        <begin position="384"/>
        <end position="389"/>
    </location>
</feature>
<feature type="strand" evidence="12">
    <location>
        <begin position="395"/>
        <end position="398"/>
    </location>
</feature>
<feature type="strand" evidence="12">
    <location>
        <begin position="406"/>
        <end position="408"/>
    </location>
</feature>
<feature type="helix" evidence="12">
    <location>
        <begin position="420"/>
        <end position="424"/>
    </location>
</feature>
<feature type="strand" evidence="12">
    <location>
        <begin position="430"/>
        <end position="432"/>
    </location>
</feature>
<feature type="strand" evidence="12">
    <location>
        <begin position="439"/>
        <end position="441"/>
    </location>
</feature>
<feature type="helix" evidence="12">
    <location>
        <begin position="444"/>
        <end position="447"/>
    </location>
</feature>
<feature type="strand" evidence="12">
    <location>
        <begin position="454"/>
        <end position="456"/>
    </location>
</feature>
<feature type="strand" evidence="12">
    <location>
        <begin position="459"/>
        <end position="464"/>
    </location>
</feature>
<feature type="turn" evidence="12">
    <location>
        <begin position="468"/>
        <end position="472"/>
    </location>
</feature>
<feature type="strand" evidence="12">
    <location>
        <begin position="478"/>
        <end position="481"/>
    </location>
</feature>
<feature type="helix" evidence="12">
    <location>
        <begin position="493"/>
        <end position="497"/>
    </location>
</feature>
<feature type="strand" evidence="12">
    <location>
        <begin position="503"/>
        <end position="505"/>
    </location>
</feature>
<feature type="helix" evidence="12">
    <location>
        <begin position="517"/>
        <end position="521"/>
    </location>
</feature>
<feature type="strand" evidence="12">
    <location>
        <begin position="527"/>
        <end position="529"/>
    </location>
</feature>
<feature type="helix" evidence="12">
    <location>
        <begin position="541"/>
        <end position="545"/>
    </location>
</feature>
<feature type="strand" evidence="12">
    <location>
        <begin position="551"/>
        <end position="553"/>
    </location>
</feature>
<feature type="strand" evidence="12">
    <location>
        <begin position="556"/>
        <end position="559"/>
    </location>
</feature>
<feature type="helix" evidence="12">
    <location>
        <begin position="565"/>
        <end position="568"/>
    </location>
</feature>
<feature type="turn" evidence="12">
    <location>
        <begin position="569"/>
        <end position="573"/>
    </location>
</feature>
<feature type="turn" evidence="12">
    <location>
        <begin position="578"/>
        <end position="581"/>
    </location>
</feature>
<feature type="strand" evidence="12">
    <location>
        <begin position="583"/>
        <end position="590"/>
    </location>
</feature>
<feature type="turn" evidence="12">
    <location>
        <begin position="594"/>
        <end position="597"/>
    </location>
</feature>
<feature type="strand" evidence="12">
    <location>
        <begin position="598"/>
        <end position="603"/>
    </location>
</feature>
<feature type="helix" evidence="12">
    <location>
        <begin position="609"/>
        <end position="614"/>
    </location>
</feature>
<feature type="turn" evidence="12">
    <location>
        <begin position="616"/>
        <end position="620"/>
    </location>
</feature>
<feature type="strand" evidence="12">
    <location>
        <begin position="623"/>
        <end position="630"/>
    </location>
</feature>
<feature type="strand" evidence="12">
    <location>
        <begin position="636"/>
        <end position="639"/>
    </location>
</feature>
<feature type="strand" evidence="12">
    <location>
        <begin position="642"/>
        <end position="645"/>
    </location>
</feature>
<feature type="strand" evidence="12">
    <location>
        <begin position="652"/>
        <end position="654"/>
    </location>
</feature>
<feature type="helix" evidence="12">
    <location>
        <begin position="657"/>
        <end position="661"/>
    </location>
</feature>
<feature type="strand" evidence="12">
    <location>
        <begin position="667"/>
        <end position="669"/>
    </location>
</feature>
<feature type="helix" evidence="12">
    <location>
        <begin position="681"/>
        <end position="685"/>
    </location>
</feature>
<feature type="strand" evidence="12">
    <location>
        <begin position="690"/>
        <end position="693"/>
    </location>
</feature>
<feature type="strand" evidence="12">
    <location>
        <begin position="696"/>
        <end position="701"/>
    </location>
</feature>
<feature type="helix" evidence="12">
    <location>
        <begin position="705"/>
        <end position="709"/>
    </location>
</feature>
<feature type="strand" evidence="12">
    <location>
        <begin position="715"/>
        <end position="717"/>
    </location>
</feature>
<feature type="strand" evidence="12">
    <location>
        <begin position="720"/>
        <end position="723"/>
    </location>
</feature>
<feature type="helix" evidence="12">
    <location>
        <begin position="733"/>
        <end position="735"/>
    </location>
</feature>
<feature type="helix" evidence="12">
    <location>
        <begin position="738"/>
        <end position="741"/>
    </location>
</feature>
<feature type="strand" evidence="12">
    <location>
        <begin position="745"/>
        <end position="749"/>
    </location>
</feature>
<sequence>MKQRWLLVLILCFFTTSLVMGIHGKHLINDDFNETALLLAFKQNSVKSDPNNVLGNWKYESGRGSCSWRGVSCSDDGRIVGLDLRNSGLTGTLNLVNLTALPNLQNLYLQGNYFSSGGDSSGSDCYLQVLDLSSNSISDYSMVDYVFSKCSNLVSVNISNNKLVGKLGFAPSSLQSLTTVDLSYNILSDKIPESFISDFPASLKYLDLTHNNLSGDFSDLSFGICGNLTFFSLSQNNLSGDKFPITLPNCKFLETLNISRNNLAGKIPNGEYWGSFQNLKQLSLAHNRLSGEIPPELSLLCKTLVILDLSGNTFSGELPSQFTACVWLQNLNLGNNYLSGDFLNTVVSKITGITYLYVAYNNISGSVPISLTNCSNLRVLDLSSNGFTGNVPSGFCSLQSSPVLEKILIANNYLSGTVPMELGKCKSLKTIDLSFNELTGPIPKEIWMLPNLSDLVMWANNLTGTIPEGVCVKGGNLETLILNNNLLTGSIPESISRCTNMIWISLSSNRLTGKIPSGIGNLSKLAILQLGNNSLSGNVPRQLGNCKSLIWLDLNSNNLTGDLPGELASQAGLVMPGSVSGKQFAFVRNEGGTDCRGAGGLVEFEGIRAERLERLPMVHSCPATRIYSGMTMYTFSANGSMIYFDISYNAVSGFIPPGYGNMGYLQVLNLGHNRITGTIPDSFGGLKAIGVLDLSHNNLQGYLPGSLGSLSFLSDLDVSNNNLTGPIPFGGQLTTFPVSRYANNSGLCGVPLRPCGSAPRRPITSRIHAKKQTVATAVIAGIAFSFMCFVMLVMALYRVRKVQKKEQKREKYIESLPTSGSCSWKLSSVPEPLSINVATFEKPLRKLTFAHLLEATNGFSAETMVGSGGFGEVYKAQLRDGSVVAIKKLIRITGQGDREFMAEMETIGKIKHRNLVPLLGYCKVGEERLLVYEYMKWGSLETVLHEKSSKKGGIYLNWAARKKIAIGAARGLAFLHHSCIPHIIHRDMKSSNVLLDEDFEARVSDFGMARLVSALDTHLSVSTLAGTPGYVPPEYYQSFRCTAKGDVYSYGVILLELLSGKKPIDPGEFGEDNNLVGWAKQLYREKRGAEILDPELVTDKSGDVELFHYLKIASQCLDDRPFKRPTMIQLMAMFKEMKADTEEDESLDEFSLKETPLVEESRDKEP</sequence>
<reference key="1">
    <citation type="journal article" date="2010" name="BMC Genomics">
        <title>Genome-wide cloning and sequence analysis of leucine-rich repeat receptor-like protein kinase genes in Arabidopsis thaliana.</title>
        <authorList>
            <person name="Gou X."/>
            <person name="He K."/>
            <person name="Yang H."/>
            <person name="Yuan T."/>
            <person name="Lin H."/>
            <person name="Clouse S.D."/>
            <person name="Li J."/>
        </authorList>
    </citation>
    <scope>NUCLEOTIDE SEQUENCE [MRNA]</scope>
    <source>
        <strain>cv. Columbia</strain>
    </source>
</reference>
<reference key="2">
    <citation type="journal article" date="2000" name="Nature">
        <title>Sequence and analysis of chromosome 1 of the plant Arabidopsis thaliana.</title>
        <authorList>
            <person name="Theologis A."/>
            <person name="Ecker J.R."/>
            <person name="Palm C.J."/>
            <person name="Federspiel N.A."/>
            <person name="Kaul S."/>
            <person name="White O."/>
            <person name="Alonso J."/>
            <person name="Altafi H."/>
            <person name="Araujo R."/>
            <person name="Bowman C.L."/>
            <person name="Brooks S.Y."/>
            <person name="Buehler E."/>
            <person name="Chan A."/>
            <person name="Chao Q."/>
            <person name="Chen H."/>
            <person name="Cheuk R.F."/>
            <person name="Chin C.W."/>
            <person name="Chung M.K."/>
            <person name="Conn L."/>
            <person name="Conway A.B."/>
            <person name="Conway A.R."/>
            <person name="Creasy T.H."/>
            <person name="Dewar K."/>
            <person name="Dunn P."/>
            <person name="Etgu P."/>
            <person name="Feldblyum T.V."/>
            <person name="Feng J.-D."/>
            <person name="Fong B."/>
            <person name="Fujii C.Y."/>
            <person name="Gill J.E."/>
            <person name="Goldsmith A.D."/>
            <person name="Haas B."/>
            <person name="Hansen N.F."/>
            <person name="Hughes B."/>
            <person name="Huizar L."/>
            <person name="Hunter J.L."/>
            <person name="Jenkins J."/>
            <person name="Johnson-Hopson C."/>
            <person name="Khan S."/>
            <person name="Khaykin E."/>
            <person name="Kim C.J."/>
            <person name="Koo H.L."/>
            <person name="Kremenetskaia I."/>
            <person name="Kurtz D.B."/>
            <person name="Kwan A."/>
            <person name="Lam B."/>
            <person name="Langin-Hooper S."/>
            <person name="Lee A."/>
            <person name="Lee J.M."/>
            <person name="Lenz C.A."/>
            <person name="Li J.H."/>
            <person name="Li Y.-P."/>
            <person name="Lin X."/>
            <person name="Liu S.X."/>
            <person name="Liu Z.A."/>
            <person name="Luros J.S."/>
            <person name="Maiti R."/>
            <person name="Marziali A."/>
            <person name="Militscher J."/>
            <person name="Miranda M."/>
            <person name="Nguyen M."/>
            <person name="Nierman W.C."/>
            <person name="Osborne B.I."/>
            <person name="Pai G."/>
            <person name="Peterson J."/>
            <person name="Pham P.K."/>
            <person name="Rizzo M."/>
            <person name="Rooney T."/>
            <person name="Rowley D."/>
            <person name="Sakano H."/>
            <person name="Salzberg S.L."/>
            <person name="Schwartz J.R."/>
            <person name="Shinn P."/>
            <person name="Southwick A.M."/>
            <person name="Sun H."/>
            <person name="Tallon L.J."/>
            <person name="Tambunga G."/>
            <person name="Toriumi M.J."/>
            <person name="Town C.D."/>
            <person name="Utterback T."/>
            <person name="Van Aken S."/>
            <person name="Vaysberg M."/>
            <person name="Vysotskaia V.S."/>
            <person name="Walker M."/>
            <person name="Wu D."/>
            <person name="Yu G."/>
            <person name="Fraser C.M."/>
            <person name="Venter J.C."/>
            <person name="Davis R.W."/>
        </authorList>
    </citation>
    <scope>NUCLEOTIDE SEQUENCE [LARGE SCALE GENOMIC DNA]</scope>
    <source>
        <strain>cv. Columbia</strain>
    </source>
</reference>
<reference key="3">
    <citation type="journal article" date="2017" name="Plant J.">
        <title>Araport11: a complete reannotation of the Arabidopsis thaliana reference genome.</title>
        <authorList>
            <person name="Cheng C.Y."/>
            <person name="Krishnakumar V."/>
            <person name="Chan A.P."/>
            <person name="Thibaud-Nissen F."/>
            <person name="Schobel S."/>
            <person name="Town C.D."/>
        </authorList>
    </citation>
    <scope>GENOME REANNOTATION</scope>
    <source>
        <strain>cv. Columbia</strain>
    </source>
</reference>
<reference key="4">
    <citation type="journal article" date="2003" name="Mol. Cell. Proteomics">
        <title>Large-scale analysis of in vivo phosphorylated membrane proteins by immobilized metal ion affinity chromatography and mass spectrometry.</title>
        <authorList>
            <person name="Nuehse T.S."/>
            <person name="Stensballe A."/>
            <person name="Jensen O.N."/>
            <person name="Peck S.C."/>
        </authorList>
    </citation>
    <scope>PHOSPHORYLATION [LARGE SCALE ANALYSIS] AT THR-1141</scope>
    <scope>IDENTIFICATION BY MASS SPECTROMETRY [LARGE SCALE ANALYSIS]</scope>
    <source>
        <strain>cv. La-0</strain>
    </source>
</reference>
<reference key="5">
    <citation type="journal article" date="2004" name="Development">
        <title>BRL1 and BRL3 are novel brassinosteroid receptors that function in vascular differentiation in Arabidopsis.</title>
        <authorList>
            <person name="Cano-Delgado A."/>
            <person name="Yin Y."/>
            <person name="Yu C."/>
            <person name="Vafeados D."/>
            <person name="Mora-Garcia S."/>
            <person name="Cheng J.-C."/>
            <person name="Nam K.H."/>
            <person name="Li J."/>
            <person name="Chory J."/>
        </authorList>
    </citation>
    <scope>FUNCTION</scope>
    <scope>SUBCELLULAR LOCATION</scope>
    <scope>STEROID-BINDING</scope>
    <scope>TISSUE SPECIFICITY</scope>
</reference>
<reference key="6">
    <citation type="journal article" date="2004" name="Plant Cell">
        <title>Phosphoproteomics of the Arabidopsis plasma membrane and a new phosphorylation site database.</title>
        <authorList>
            <person name="Nuehse T.S."/>
            <person name="Stensballe A."/>
            <person name="Jensen O.N."/>
            <person name="Peck S.C."/>
        </authorList>
    </citation>
    <scope>IDENTIFICATION BY MASS SPECTROMETRY [LARGE SCALE ANALYSIS]</scope>
</reference>
<reference key="7">
    <citation type="journal article" date="2004" name="Plant J.">
        <title>BRL1, a leucine-rich repeat receptor-like protein kinase, is functionally redundant with BRI1 in regulating Arabidopsis brassinosteroid signaling.</title>
        <authorList>
            <person name="Zhou A."/>
            <person name="Wang H."/>
            <person name="Walker J.C."/>
            <person name="Li J."/>
        </authorList>
    </citation>
    <scope>FUNCTION</scope>
    <scope>TISSUE SPECIFICITY</scope>
</reference>
<gene>
    <name type="primary">BRL1</name>
    <name type="ordered locus">At1g55610</name>
    <name type="ORF">F20N2.4</name>
</gene>
<dbReference type="EC" id="2.7.11.1"/>
<dbReference type="EMBL" id="FJ708660">
    <property type="protein sequence ID" value="ACN59256.1"/>
    <property type="molecule type" value="mRNA"/>
</dbReference>
<dbReference type="EMBL" id="AC002328">
    <property type="protein sequence ID" value="AAF79510.1"/>
    <property type="molecule type" value="Genomic_DNA"/>
</dbReference>
<dbReference type="EMBL" id="CP002684">
    <property type="protein sequence ID" value="AEE33271.1"/>
    <property type="molecule type" value="Genomic_DNA"/>
</dbReference>
<dbReference type="EMBL" id="CP002684">
    <property type="protein sequence ID" value="AEE33272.1"/>
    <property type="molecule type" value="Genomic_DNA"/>
</dbReference>
<dbReference type="PIR" id="F96598">
    <property type="entry name" value="F96598"/>
</dbReference>
<dbReference type="RefSeq" id="NP_001117501.1">
    <property type="nucleotide sequence ID" value="NM_001124029.2"/>
</dbReference>
<dbReference type="RefSeq" id="NP_175957.1">
    <property type="nucleotide sequence ID" value="NM_104437.3"/>
</dbReference>
<dbReference type="PDB" id="4J0M">
    <property type="method" value="X-ray"/>
    <property type="resolution" value="2.50 A"/>
    <property type="chains" value="A/B=25-758"/>
</dbReference>
<dbReference type="PDBsum" id="4J0M"/>
<dbReference type="SMR" id="Q9ZWC8"/>
<dbReference type="BioGRID" id="27235">
    <property type="interactions" value="17"/>
</dbReference>
<dbReference type="FunCoup" id="Q9ZWC8">
    <property type="interactions" value="493"/>
</dbReference>
<dbReference type="IntAct" id="Q9ZWC8">
    <property type="interactions" value="28"/>
</dbReference>
<dbReference type="STRING" id="3702.Q9ZWC8"/>
<dbReference type="GlyCosmos" id="Q9ZWC8">
    <property type="glycosylation" value="17 sites, No reported glycans"/>
</dbReference>
<dbReference type="GlyGen" id="Q9ZWC8">
    <property type="glycosylation" value="17 sites"/>
</dbReference>
<dbReference type="iPTMnet" id="Q9ZWC8"/>
<dbReference type="PaxDb" id="3702-AT1G55610.2"/>
<dbReference type="ProteomicsDB" id="240631"/>
<dbReference type="EnsemblPlants" id="AT1G55610.1">
    <property type="protein sequence ID" value="AT1G55610.1"/>
    <property type="gene ID" value="AT1G55610"/>
</dbReference>
<dbReference type="EnsemblPlants" id="AT1G55610.2">
    <property type="protein sequence ID" value="AT1G55610.2"/>
    <property type="gene ID" value="AT1G55610"/>
</dbReference>
<dbReference type="GeneID" id="842010"/>
<dbReference type="Gramene" id="AT1G55610.1">
    <property type="protein sequence ID" value="AT1G55610.1"/>
    <property type="gene ID" value="AT1G55610"/>
</dbReference>
<dbReference type="Gramene" id="AT1G55610.2">
    <property type="protein sequence ID" value="AT1G55610.2"/>
    <property type="gene ID" value="AT1G55610"/>
</dbReference>
<dbReference type="KEGG" id="ath:AT1G55610"/>
<dbReference type="Araport" id="AT1G55610"/>
<dbReference type="TAIR" id="AT1G55610">
    <property type="gene designation" value="BRL1"/>
</dbReference>
<dbReference type="eggNOG" id="ENOG502QQ5H">
    <property type="taxonomic scope" value="Eukaryota"/>
</dbReference>
<dbReference type="HOGENOM" id="CLU_000288_22_4_1"/>
<dbReference type="InParanoid" id="Q9ZWC8"/>
<dbReference type="OMA" id="MIYFDIS"/>
<dbReference type="PhylomeDB" id="Q9ZWC8"/>
<dbReference type="PRO" id="PR:Q9ZWC8"/>
<dbReference type="Proteomes" id="UP000006548">
    <property type="component" value="Chromosome 1"/>
</dbReference>
<dbReference type="ExpressionAtlas" id="Q9ZWC8">
    <property type="expression patterns" value="baseline and differential"/>
</dbReference>
<dbReference type="GO" id="GO:0005886">
    <property type="term" value="C:plasma membrane"/>
    <property type="evidence" value="ECO:0007005"/>
    <property type="project" value="TAIR"/>
</dbReference>
<dbReference type="GO" id="GO:0005524">
    <property type="term" value="F:ATP binding"/>
    <property type="evidence" value="ECO:0007669"/>
    <property type="project" value="UniProtKB-KW"/>
</dbReference>
<dbReference type="GO" id="GO:0106310">
    <property type="term" value="F:protein serine kinase activity"/>
    <property type="evidence" value="ECO:0007669"/>
    <property type="project" value="RHEA"/>
</dbReference>
<dbReference type="GO" id="GO:0004674">
    <property type="term" value="F:protein serine/threonine kinase activity"/>
    <property type="evidence" value="ECO:0007669"/>
    <property type="project" value="UniProtKB-KW"/>
</dbReference>
<dbReference type="GO" id="GO:0005496">
    <property type="term" value="F:steroid binding"/>
    <property type="evidence" value="ECO:0007669"/>
    <property type="project" value="UniProtKB-KW"/>
</dbReference>
<dbReference type="FunFam" id="1.10.510.10:FF:000291">
    <property type="entry name" value="Brassinosteroid LRR receptor kinase"/>
    <property type="match status" value="1"/>
</dbReference>
<dbReference type="FunFam" id="3.80.10.10:FF:000125">
    <property type="entry name" value="Brassinosteroid LRR receptor kinase"/>
    <property type="match status" value="1"/>
</dbReference>
<dbReference type="FunFam" id="3.80.10.10:FF:000041">
    <property type="entry name" value="LRR receptor-like serine/threonine-protein kinase ERECTA"/>
    <property type="match status" value="1"/>
</dbReference>
<dbReference type="FunFam" id="3.30.1490.310:FF:000001">
    <property type="entry name" value="Serine/threonine-protein kinase BRI1-like 1"/>
    <property type="match status" value="1"/>
</dbReference>
<dbReference type="FunFam" id="3.30.200.20:FF:000150">
    <property type="entry name" value="serine/threonine-protein kinase BRI1-like 2"/>
    <property type="match status" value="1"/>
</dbReference>
<dbReference type="Gene3D" id="3.30.1490.310">
    <property type="match status" value="1"/>
</dbReference>
<dbReference type="Gene3D" id="3.30.200.20">
    <property type="entry name" value="Phosphorylase Kinase, domain 1"/>
    <property type="match status" value="1"/>
</dbReference>
<dbReference type="Gene3D" id="3.80.10.10">
    <property type="entry name" value="Ribonuclease Inhibitor"/>
    <property type="match status" value="1"/>
</dbReference>
<dbReference type="Gene3D" id="1.10.510.10">
    <property type="entry name" value="Transferase(Phosphotransferase) domain 1"/>
    <property type="match status" value="1"/>
</dbReference>
<dbReference type="InterPro" id="IPR045381">
    <property type="entry name" value="BRI1_island_dom"/>
</dbReference>
<dbReference type="InterPro" id="IPR011009">
    <property type="entry name" value="Kinase-like_dom_sf"/>
</dbReference>
<dbReference type="InterPro" id="IPR001611">
    <property type="entry name" value="Leu-rich_rpt"/>
</dbReference>
<dbReference type="InterPro" id="IPR003591">
    <property type="entry name" value="Leu-rich_rpt_typical-subtyp"/>
</dbReference>
<dbReference type="InterPro" id="IPR032675">
    <property type="entry name" value="LRR_dom_sf"/>
</dbReference>
<dbReference type="InterPro" id="IPR013210">
    <property type="entry name" value="LRR_N_plant-typ"/>
</dbReference>
<dbReference type="InterPro" id="IPR051716">
    <property type="entry name" value="Plant_RL_S/T_kinase"/>
</dbReference>
<dbReference type="InterPro" id="IPR000719">
    <property type="entry name" value="Prot_kinase_dom"/>
</dbReference>
<dbReference type="InterPro" id="IPR017441">
    <property type="entry name" value="Protein_kinase_ATP_BS"/>
</dbReference>
<dbReference type="InterPro" id="IPR008271">
    <property type="entry name" value="Ser/Thr_kinase_AS"/>
</dbReference>
<dbReference type="PANTHER" id="PTHR48053">
    <property type="entry name" value="LEUCINE RICH REPEAT FAMILY PROTEIN, EXPRESSED"/>
    <property type="match status" value="1"/>
</dbReference>
<dbReference type="PANTHER" id="PTHR48053:SF31">
    <property type="entry name" value="SERINE_THREONINE-PROTEIN KINASE BRI1-LIKE 1"/>
    <property type="match status" value="1"/>
</dbReference>
<dbReference type="Pfam" id="PF20141">
    <property type="entry name" value="Island"/>
    <property type="match status" value="1"/>
</dbReference>
<dbReference type="Pfam" id="PF00560">
    <property type="entry name" value="LRR_1"/>
    <property type="match status" value="9"/>
</dbReference>
<dbReference type="Pfam" id="PF13516">
    <property type="entry name" value="LRR_6"/>
    <property type="match status" value="1"/>
</dbReference>
<dbReference type="Pfam" id="PF13855">
    <property type="entry name" value="LRR_8"/>
    <property type="match status" value="1"/>
</dbReference>
<dbReference type="Pfam" id="PF08263">
    <property type="entry name" value="LRRNT_2"/>
    <property type="match status" value="1"/>
</dbReference>
<dbReference type="Pfam" id="PF00069">
    <property type="entry name" value="Pkinase"/>
    <property type="match status" value="1"/>
</dbReference>
<dbReference type="SMART" id="SM00369">
    <property type="entry name" value="LRR_TYP"/>
    <property type="match status" value="8"/>
</dbReference>
<dbReference type="SMART" id="SM00220">
    <property type="entry name" value="S_TKc"/>
    <property type="match status" value="1"/>
</dbReference>
<dbReference type="SUPFAM" id="SSF52058">
    <property type="entry name" value="L domain-like"/>
    <property type="match status" value="3"/>
</dbReference>
<dbReference type="SUPFAM" id="SSF56112">
    <property type="entry name" value="Protein kinase-like (PK-like)"/>
    <property type="match status" value="1"/>
</dbReference>
<dbReference type="PROSITE" id="PS51450">
    <property type="entry name" value="LRR"/>
    <property type="match status" value="16"/>
</dbReference>
<dbReference type="PROSITE" id="PS00107">
    <property type="entry name" value="PROTEIN_KINASE_ATP"/>
    <property type="match status" value="1"/>
</dbReference>
<dbReference type="PROSITE" id="PS50011">
    <property type="entry name" value="PROTEIN_KINASE_DOM"/>
    <property type="match status" value="1"/>
</dbReference>
<dbReference type="PROSITE" id="PS00108">
    <property type="entry name" value="PROTEIN_KINASE_ST"/>
    <property type="match status" value="1"/>
</dbReference>